<evidence type="ECO:0000255" key="1">
    <source>
        <dbReference type="HAMAP-Rule" id="MF_00691"/>
    </source>
</evidence>
<reference key="1">
    <citation type="journal article" date="2004" name="Nat. Genet.">
        <title>Comparison of genome degradation in Paratyphi A and Typhi, human-restricted serovars of Salmonella enterica that cause typhoid.</title>
        <authorList>
            <person name="McClelland M."/>
            <person name="Sanderson K.E."/>
            <person name="Clifton S.W."/>
            <person name="Latreille P."/>
            <person name="Porwollik S."/>
            <person name="Sabo A."/>
            <person name="Meyer R."/>
            <person name="Bieri T."/>
            <person name="Ozersky P."/>
            <person name="McLellan M."/>
            <person name="Harkins C.R."/>
            <person name="Wang C."/>
            <person name="Nguyen C."/>
            <person name="Berghoff A."/>
            <person name="Elliott G."/>
            <person name="Kohlberg S."/>
            <person name="Strong C."/>
            <person name="Du F."/>
            <person name="Carter J."/>
            <person name="Kremizki C."/>
            <person name="Layman D."/>
            <person name="Leonard S."/>
            <person name="Sun H."/>
            <person name="Fulton L."/>
            <person name="Nash W."/>
            <person name="Miner T."/>
            <person name="Minx P."/>
            <person name="Delehaunty K."/>
            <person name="Fronick C."/>
            <person name="Magrini V."/>
            <person name="Nhan M."/>
            <person name="Warren W."/>
            <person name="Florea L."/>
            <person name="Spieth J."/>
            <person name="Wilson R.K."/>
        </authorList>
    </citation>
    <scope>NUCLEOTIDE SEQUENCE [LARGE SCALE GENOMIC DNA]</scope>
    <source>
        <strain>ATCC 9150 / SARB42</strain>
    </source>
</reference>
<organism>
    <name type="scientific">Salmonella paratyphi A (strain ATCC 9150 / SARB42)</name>
    <dbReference type="NCBI Taxonomy" id="295319"/>
    <lineage>
        <taxon>Bacteria</taxon>
        <taxon>Pseudomonadati</taxon>
        <taxon>Pseudomonadota</taxon>
        <taxon>Gammaproteobacteria</taxon>
        <taxon>Enterobacterales</taxon>
        <taxon>Enterobacteriaceae</taxon>
        <taxon>Salmonella</taxon>
    </lineage>
</organism>
<dbReference type="EC" id="3.5.2.9" evidence="1"/>
<dbReference type="EMBL" id="CP000026">
    <property type="protein sequence ID" value="AAV77929.1"/>
    <property type="molecule type" value="Genomic_DNA"/>
</dbReference>
<dbReference type="RefSeq" id="WP_001017915.1">
    <property type="nucleotide sequence ID" value="NC_006511.1"/>
</dbReference>
<dbReference type="SMR" id="Q5PCK6"/>
<dbReference type="KEGG" id="spt:SPA2027"/>
<dbReference type="HOGENOM" id="CLU_069535_0_0_6"/>
<dbReference type="Proteomes" id="UP000008185">
    <property type="component" value="Chromosome"/>
</dbReference>
<dbReference type="GO" id="GO:0017168">
    <property type="term" value="F:5-oxoprolinase (ATP-hydrolyzing) activity"/>
    <property type="evidence" value="ECO:0007669"/>
    <property type="project" value="UniProtKB-UniRule"/>
</dbReference>
<dbReference type="GO" id="GO:0005524">
    <property type="term" value="F:ATP binding"/>
    <property type="evidence" value="ECO:0007669"/>
    <property type="project" value="UniProtKB-UniRule"/>
</dbReference>
<dbReference type="GO" id="GO:0005975">
    <property type="term" value="P:carbohydrate metabolic process"/>
    <property type="evidence" value="ECO:0007669"/>
    <property type="project" value="InterPro"/>
</dbReference>
<dbReference type="CDD" id="cd10800">
    <property type="entry name" value="LamB_YcsF_YbgL_like"/>
    <property type="match status" value="1"/>
</dbReference>
<dbReference type="Gene3D" id="3.20.20.370">
    <property type="entry name" value="Glycoside hydrolase/deacetylase"/>
    <property type="match status" value="1"/>
</dbReference>
<dbReference type="HAMAP" id="MF_00691">
    <property type="entry name" value="PxpA"/>
    <property type="match status" value="1"/>
</dbReference>
<dbReference type="InterPro" id="IPR011330">
    <property type="entry name" value="Glyco_hydro/deAcase_b/a-brl"/>
</dbReference>
<dbReference type="InterPro" id="IPR005501">
    <property type="entry name" value="LamB/YcsF/PxpA-like"/>
</dbReference>
<dbReference type="NCBIfam" id="NF003812">
    <property type="entry name" value="PRK05406.1-1"/>
    <property type="match status" value="1"/>
</dbReference>
<dbReference type="NCBIfam" id="NF003814">
    <property type="entry name" value="PRK05406.1-3"/>
    <property type="match status" value="1"/>
</dbReference>
<dbReference type="NCBIfam" id="NF003815">
    <property type="entry name" value="PRK05406.1-4"/>
    <property type="match status" value="1"/>
</dbReference>
<dbReference type="NCBIfam" id="NF003816">
    <property type="entry name" value="PRK05406.1-5"/>
    <property type="match status" value="1"/>
</dbReference>
<dbReference type="PANTHER" id="PTHR30292:SF0">
    <property type="entry name" value="5-OXOPROLINASE SUBUNIT A"/>
    <property type="match status" value="1"/>
</dbReference>
<dbReference type="PANTHER" id="PTHR30292">
    <property type="entry name" value="UNCHARACTERIZED PROTEIN YBGL-RELATED"/>
    <property type="match status" value="1"/>
</dbReference>
<dbReference type="Pfam" id="PF03746">
    <property type="entry name" value="LamB_YcsF"/>
    <property type="match status" value="1"/>
</dbReference>
<dbReference type="SUPFAM" id="SSF88713">
    <property type="entry name" value="Glycoside hydrolase/deacetylase"/>
    <property type="match status" value="1"/>
</dbReference>
<gene>
    <name evidence="1" type="primary">pxpA</name>
    <name type="ordered locus">SPA2027</name>
</gene>
<name>PXPA_SALPA</name>
<keyword id="KW-0067">ATP-binding</keyword>
<keyword id="KW-0378">Hydrolase</keyword>
<keyword id="KW-0547">Nucleotide-binding</keyword>
<feature type="chain" id="PRO_0000185038" description="5-oxoprolinase subunit A">
    <location>
        <begin position="1"/>
        <end position="244"/>
    </location>
</feature>
<protein>
    <recommendedName>
        <fullName evidence="1">5-oxoprolinase subunit A</fullName>
        <shortName evidence="1">5-OPase subunit A</shortName>
        <ecNumber evidence="1">3.5.2.9</ecNumber>
    </recommendedName>
    <alternativeName>
        <fullName evidence="1">5-oxoprolinase (ATP-hydrolyzing) subunit A</fullName>
    </alternativeName>
</protein>
<accession>Q5PCK6</accession>
<sequence length="244" mass="26060">MNIDLNADLGEGCASDSELLTLVSSANIASGFHAGDAQTMLTCVREALKNGVAIGAHPSFPDRDNFGRTAMVLPPETVYAQTLYQIGALGAIVQAQGGVMRHVKPHGMLYNQAAKDPRLAQAIAKAVHDYDPSLILVGLAGSELIRAGERCRLVTRQEVFADRGYQADGSLVPRMQPGALIHDEEQALAQTLDMVQAGRVKSVTGVWTTVTAQTVCIHGDGEYALAFARRLRAAFNARNIHVIA</sequence>
<comment type="function">
    <text evidence="1">Catalyzes the cleavage of 5-oxoproline to form L-glutamate coupled to the hydrolysis of ATP to ADP and inorganic phosphate.</text>
</comment>
<comment type="catalytic activity">
    <reaction evidence="1">
        <text>5-oxo-L-proline + ATP + 2 H2O = L-glutamate + ADP + phosphate + H(+)</text>
        <dbReference type="Rhea" id="RHEA:10348"/>
        <dbReference type="ChEBI" id="CHEBI:15377"/>
        <dbReference type="ChEBI" id="CHEBI:15378"/>
        <dbReference type="ChEBI" id="CHEBI:29985"/>
        <dbReference type="ChEBI" id="CHEBI:30616"/>
        <dbReference type="ChEBI" id="CHEBI:43474"/>
        <dbReference type="ChEBI" id="CHEBI:58402"/>
        <dbReference type="ChEBI" id="CHEBI:456216"/>
        <dbReference type="EC" id="3.5.2.9"/>
    </reaction>
</comment>
<comment type="subunit">
    <text evidence="1">Forms a complex composed of PxpA, PxpB and PxpC.</text>
</comment>
<comment type="similarity">
    <text evidence="1">Belongs to the LamB/PxpA family.</text>
</comment>
<proteinExistence type="inferred from homology"/>